<protein>
    <recommendedName>
        <fullName>Ras-related protein Rab-8A</fullName>
        <ecNumber evidence="22">3.6.5.2</ecNumber>
    </recommendedName>
    <alternativeName>
        <fullName>Oncogene c-mel</fullName>
    </alternativeName>
</protein>
<gene>
    <name evidence="24" type="primary">Rab8a</name>
    <name type="synonym">Mel</name>
    <name type="synonym">Rab8</name>
</gene>
<name>RAB8A_MOUSE</name>
<reference key="1">
    <citation type="journal article" date="1991" name="Oncogene">
        <title>The MEL gene: a new member of the RAB/YPT class of RAS-related genes.</title>
        <authorList>
            <person name="Nimmo E.R."/>
            <person name="Sanders P.G."/>
            <person name="Padua R.A."/>
            <person name="Hughes D."/>
            <person name="Williamson R."/>
            <person name="Johnson K.J."/>
        </authorList>
    </citation>
    <scope>NUCLEOTIDE SEQUENCE [MRNA]</scope>
</reference>
<reference key="2">
    <citation type="journal article" date="2005" name="Science">
        <title>The transcriptional landscape of the mammalian genome.</title>
        <authorList>
            <person name="Carninci P."/>
            <person name="Kasukawa T."/>
            <person name="Katayama S."/>
            <person name="Gough J."/>
            <person name="Frith M.C."/>
            <person name="Maeda N."/>
            <person name="Oyama R."/>
            <person name="Ravasi T."/>
            <person name="Lenhard B."/>
            <person name="Wells C."/>
            <person name="Kodzius R."/>
            <person name="Shimokawa K."/>
            <person name="Bajic V.B."/>
            <person name="Brenner S.E."/>
            <person name="Batalov S."/>
            <person name="Forrest A.R."/>
            <person name="Zavolan M."/>
            <person name="Davis M.J."/>
            <person name="Wilming L.G."/>
            <person name="Aidinis V."/>
            <person name="Allen J.E."/>
            <person name="Ambesi-Impiombato A."/>
            <person name="Apweiler R."/>
            <person name="Aturaliya R.N."/>
            <person name="Bailey T.L."/>
            <person name="Bansal M."/>
            <person name="Baxter L."/>
            <person name="Beisel K.W."/>
            <person name="Bersano T."/>
            <person name="Bono H."/>
            <person name="Chalk A.M."/>
            <person name="Chiu K.P."/>
            <person name="Choudhary V."/>
            <person name="Christoffels A."/>
            <person name="Clutterbuck D.R."/>
            <person name="Crowe M.L."/>
            <person name="Dalla E."/>
            <person name="Dalrymple B.P."/>
            <person name="de Bono B."/>
            <person name="Della Gatta G."/>
            <person name="di Bernardo D."/>
            <person name="Down T."/>
            <person name="Engstrom P."/>
            <person name="Fagiolini M."/>
            <person name="Faulkner G."/>
            <person name="Fletcher C.F."/>
            <person name="Fukushima T."/>
            <person name="Furuno M."/>
            <person name="Futaki S."/>
            <person name="Gariboldi M."/>
            <person name="Georgii-Hemming P."/>
            <person name="Gingeras T.R."/>
            <person name="Gojobori T."/>
            <person name="Green R.E."/>
            <person name="Gustincich S."/>
            <person name="Harbers M."/>
            <person name="Hayashi Y."/>
            <person name="Hensch T.K."/>
            <person name="Hirokawa N."/>
            <person name="Hill D."/>
            <person name="Huminiecki L."/>
            <person name="Iacono M."/>
            <person name="Ikeo K."/>
            <person name="Iwama A."/>
            <person name="Ishikawa T."/>
            <person name="Jakt M."/>
            <person name="Kanapin A."/>
            <person name="Katoh M."/>
            <person name="Kawasawa Y."/>
            <person name="Kelso J."/>
            <person name="Kitamura H."/>
            <person name="Kitano H."/>
            <person name="Kollias G."/>
            <person name="Krishnan S.P."/>
            <person name="Kruger A."/>
            <person name="Kummerfeld S.K."/>
            <person name="Kurochkin I.V."/>
            <person name="Lareau L.F."/>
            <person name="Lazarevic D."/>
            <person name="Lipovich L."/>
            <person name="Liu J."/>
            <person name="Liuni S."/>
            <person name="McWilliam S."/>
            <person name="Madan Babu M."/>
            <person name="Madera M."/>
            <person name="Marchionni L."/>
            <person name="Matsuda H."/>
            <person name="Matsuzawa S."/>
            <person name="Miki H."/>
            <person name="Mignone F."/>
            <person name="Miyake S."/>
            <person name="Morris K."/>
            <person name="Mottagui-Tabar S."/>
            <person name="Mulder N."/>
            <person name="Nakano N."/>
            <person name="Nakauchi H."/>
            <person name="Ng P."/>
            <person name="Nilsson R."/>
            <person name="Nishiguchi S."/>
            <person name="Nishikawa S."/>
            <person name="Nori F."/>
            <person name="Ohara O."/>
            <person name="Okazaki Y."/>
            <person name="Orlando V."/>
            <person name="Pang K.C."/>
            <person name="Pavan W.J."/>
            <person name="Pavesi G."/>
            <person name="Pesole G."/>
            <person name="Petrovsky N."/>
            <person name="Piazza S."/>
            <person name="Reed J."/>
            <person name="Reid J.F."/>
            <person name="Ring B.Z."/>
            <person name="Ringwald M."/>
            <person name="Rost B."/>
            <person name="Ruan Y."/>
            <person name="Salzberg S.L."/>
            <person name="Sandelin A."/>
            <person name="Schneider C."/>
            <person name="Schoenbach C."/>
            <person name="Sekiguchi K."/>
            <person name="Semple C.A."/>
            <person name="Seno S."/>
            <person name="Sessa L."/>
            <person name="Sheng Y."/>
            <person name="Shibata Y."/>
            <person name="Shimada H."/>
            <person name="Shimada K."/>
            <person name="Silva D."/>
            <person name="Sinclair B."/>
            <person name="Sperling S."/>
            <person name="Stupka E."/>
            <person name="Sugiura K."/>
            <person name="Sultana R."/>
            <person name="Takenaka Y."/>
            <person name="Taki K."/>
            <person name="Tammoja K."/>
            <person name="Tan S.L."/>
            <person name="Tang S."/>
            <person name="Taylor M.S."/>
            <person name="Tegner J."/>
            <person name="Teichmann S.A."/>
            <person name="Ueda H.R."/>
            <person name="van Nimwegen E."/>
            <person name="Verardo R."/>
            <person name="Wei C.L."/>
            <person name="Yagi K."/>
            <person name="Yamanishi H."/>
            <person name="Zabarovsky E."/>
            <person name="Zhu S."/>
            <person name="Zimmer A."/>
            <person name="Hide W."/>
            <person name="Bult C."/>
            <person name="Grimmond S.M."/>
            <person name="Teasdale R.D."/>
            <person name="Liu E.T."/>
            <person name="Brusic V."/>
            <person name="Quackenbush J."/>
            <person name="Wahlestedt C."/>
            <person name="Mattick J.S."/>
            <person name="Hume D.A."/>
            <person name="Kai C."/>
            <person name="Sasaki D."/>
            <person name="Tomaru Y."/>
            <person name="Fukuda S."/>
            <person name="Kanamori-Katayama M."/>
            <person name="Suzuki M."/>
            <person name="Aoki J."/>
            <person name="Arakawa T."/>
            <person name="Iida J."/>
            <person name="Imamura K."/>
            <person name="Itoh M."/>
            <person name="Kato T."/>
            <person name="Kawaji H."/>
            <person name="Kawagashira N."/>
            <person name="Kawashima T."/>
            <person name="Kojima M."/>
            <person name="Kondo S."/>
            <person name="Konno H."/>
            <person name="Nakano K."/>
            <person name="Ninomiya N."/>
            <person name="Nishio T."/>
            <person name="Okada M."/>
            <person name="Plessy C."/>
            <person name="Shibata K."/>
            <person name="Shiraki T."/>
            <person name="Suzuki S."/>
            <person name="Tagami M."/>
            <person name="Waki K."/>
            <person name="Watahiki A."/>
            <person name="Okamura-Oho Y."/>
            <person name="Suzuki H."/>
            <person name="Kawai J."/>
            <person name="Hayashizaki Y."/>
        </authorList>
    </citation>
    <scope>NUCLEOTIDE SEQUENCE [LARGE SCALE MRNA]</scope>
    <source>
        <strain>C57BL/6J</strain>
        <tissue>Cerebellum</tissue>
        <tissue>Retina</tissue>
    </source>
</reference>
<reference key="3">
    <citation type="journal article" date="2004" name="Genome Res.">
        <title>The status, quality, and expansion of the NIH full-length cDNA project: the Mammalian Gene Collection (MGC).</title>
        <authorList>
            <consortium name="The MGC Project Team"/>
        </authorList>
    </citation>
    <scope>NUCLEOTIDE SEQUENCE [LARGE SCALE MRNA]</scope>
    <source>
        <strain>FVB/N</strain>
        <tissue>Liver</tissue>
    </source>
</reference>
<reference key="4">
    <citation type="submission" date="2007-04" db="UniProtKB">
        <authorList>
            <person name="Lubec G."/>
            <person name="Kang S.U."/>
        </authorList>
    </citation>
    <scope>PROTEIN SEQUENCE OF 11-21; 59-69 AND 139-153</scope>
    <scope>IDENTIFICATION BY MASS SPECTROMETRY</scope>
    <source>
        <strain>C57BL/6J</strain>
        <tissue>Brain</tissue>
    </source>
</reference>
<reference key="5">
    <citation type="journal article" date="1996" name="Proc. Natl. Acad. Sci. U.S.A.">
        <title>In its active form, the GTP-binding protein rab8 interacts with a stress-activated protein kinase.</title>
        <authorList>
            <person name="Ren M."/>
            <person name="Zeng J."/>
            <person name="De Lemos-Chiarandini C."/>
            <person name="Rosenfeld M."/>
            <person name="Adesnik M."/>
            <person name="Sabatini D.D."/>
        </authorList>
    </citation>
    <scope>INTERACTION WITH MAP4K2</scope>
    <source>
        <strain>BALB/cJ</strain>
        <tissue>Melanoma</tissue>
    </source>
</reference>
<reference key="6">
    <citation type="journal article" date="2003" name="J. Biol. Chem.">
        <title>Distinct Rab binding specificity of Rim1, Rim2, rabphilin, and Noc2. Identification of a critical determinant of Rab3A/Rab27A recognition by Rim2.</title>
        <authorList>
            <person name="Fukuda M."/>
        </authorList>
    </citation>
    <scope>INTERACTION WITH RIMS2; RPH3A AND RPH3AL</scope>
</reference>
<reference key="7">
    <citation type="journal article" date="2003" name="J. Biol. Chem.">
        <title>Slp4-a/granuphilin-a inhibits dense-core vesicle exocytosis through interaction with the GDP-bound form of Rab27A in PC12 cells.</title>
        <authorList>
            <person name="Fukuda M."/>
        </authorList>
    </citation>
    <scope>INTERACTION WITH SYTL4</scope>
</reference>
<reference key="8">
    <citation type="journal article" date="2007" name="Genomics">
        <title>Identification of three novel proteins (SGSM1, 2, 3) which modulate small G protein (RAP and RAB)-mediated signaling pathway.</title>
        <authorList>
            <person name="Yang H."/>
            <person name="Sasaki T."/>
            <person name="Minoshima S."/>
            <person name="Shimizu N."/>
        </authorList>
    </citation>
    <scope>INTERACTION WITH SGSM1 AND SGSM3</scope>
</reference>
<reference key="9">
    <citation type="journal article" date="2008" name="Mol. Biol. Cell">
        <title>The interaction of JRAB/MICAL-L2 with Rab8 and Rab13 coordinates the assembly of tight junctions and adherens junctions.</title>
        <authorList>
            <person name="Yamamura R."/>
            <person name="Nishimura N."/>
            <person name="Nakatsuji H."/>
            <person name="Arase S."/>
            <person name="Sasaki T."/>
        </authorList>
    </citation>
    <scope>FUNCTION IN ENDOCYTIC RECYCLING</scope>
    <scope>SUBCELLULAR LOCATION</scope>
    <scope>INTERACTION WITH MICAL1; MICALL1 AND MICALL2</scope>
</reference>
<reference key="10">
    <citation type="journal article" date="2009" name="Hum. Mol. Genet.">
        <title>Ahi1, whose human ortholog is mutated in Joubert syndrome, is required for Rab8a localization, ciliogenesis and vesicle trafficking.</title>
        <authorList>
            <person name="Hsiao Y.C."/>
            <person name="Tong Z.J."/>
            <person name="Westfall J.E."/>
            <person name="Ault J.G."/>
            <person name="Page-McCaw P.S."/>
            <person name="Ferland R.J."/>
        </authorList>
    </citation>
    <scope>SUBCELLULAR LOCATION</scope>
    <scope>INTERACTION WITH AHI1</scope>
</reference>
<reference key="11">
    <citation type="journal article" date="2009" name="Immunity">
        <title>The phagosomal proteome in interferon-gamma-activated macrophages.</title>
        <authorList>
            <person name="Trost M."/>
            <person name="English L."/>
            <person name="Lemieux S."/>
            <person name="Courcelles M."/>
            <person name="Desjardins M."/>
            <person name="Thibault P."/>
        </authorList>
    </citation>
    <scope>IDENTIFICATION BY MASS SPECTROMETRY [LARGE SCALE ANALYSIS]</scope>
</reference>
<reference key="12">
    <citation type="journal article" date="2010" name="Cell">
        <title>A tissue-specific atlas of mouse protein phosphorylation and expression.</title>
        <authorList>
            <person name="Huttlin E.L."/>
            <person name="Jedrychowski M.P."/>
            <person name="Elias J.E."/>
            <person name="Goswami T."/>
            <person name="Rad R."/>
            <person name="Beausoleil S.A."/>
            <person name="Villen J."/>
            <person name="Haas W."/>
            <person name="Sowa M.E."/>
            <person name="Gygi S.P."/>
        </authorList>
    </citation>
    <scope>PHOSPHORYLATION [LARGE SCALE ANALYSIS] AT SER-185</scope>
    <scope>IDENTIFICATION BY MASS SPECTROMETRY [LARGE SCALE ANALYSIS]</scope>
    <source>
        <tissue>Brain</tissue>
        <tissue>Brown adipose tissue</tissue>
        <tissue>Heart</tissue>
        <tissue>Kidney</tissue>
        <tissue>Liver</tissue>
        <tissue>Lung</tissue>
        <tissue>Pancreas</tissue>
        <tissue>Spleen</tissue>
        <tissue>Testis</tissue>
    </source>
</reference>
<reference key="13">
    <citation type="journal article" date="2010" name="Dev. Cell">
        <title>Pitchfork regulates primary cilia disassembly and left-right asymmetry.</title>
        <authorList>
            <person name="Kinzel D."/>
            <person name="Boldt K."/>
            <person name="Davis E.E."/>
            <person name="Burtscher I."/>
            <person name="Trumbach D."/>
            <person name="Diplas B."/>
            <person name="Attie-Bitach T."/>
            <person name="Wurst W."/>
            <person name="Katsanis N."/>
            <person name="Ueffing M."/>
            <person name="Lickert H."/>
        </authorList>
    </citation>
    <scope>INTERACTION WITH CIMAP3</scope>
</reference>
<reference key="14">
    <citation type="journal article" date="2014" name="Cell. Mol. Life Sci.">
        <title>The nucleotide-binding proteins Nubp1 and Nubp2 are negative regulators of ciliogenesis.</title>
        <authorList>
            <person name="Kypri E."/>
            <person name="Christodoulou A."/>
            <person name="Maimaris G."/>
            <person name="Lethan M."/>
            <person name="Markaki M."/>
            <person name="Lysandrou C."/>
            <person name="Lederer C.W."/>
            <person name="Tavernarakis N."/>
            <person name="Geimer S."/>
            <person name="Pedersen L.B."/>
            <person name="Santama N."/>
        </authorList>
    </citation>
    <scope>SUBCELLULAR LOCATION</scope>
</reference>
<reference key="15">
    <citation type="journal article" date="2015" name="PLoS Biol.">
        <title>GSK3beta-Dzip1-Rab8 cascade regulates ciliogenesis after mitosis.</title>
        <authorList>
            <person name="Zhang B."/>
            <person name="Zhang T."/>
            <person name="Wang G."/>
            <person name="Wang G."/>
            <person name="Chi W."/>
            <person name="Jiang Q."/>
            <person name="Zhang C."/>
        </authorList>
    </citation>
    <scope>FUNCTION</scope>
    <scope>INTERACTION WITH DZIP1</scope>
    <scope>SUBCELLULAR LOCATION</scope>
</reference>
<reference key="16">
    <citation type="journal article" date="2016" name="Elife">
        <title>Phosphoproteomics reveals that Parkinson's disease kinase LRRK2 regulates a subset of Rab GTPases.</title>
        <authorList>
            <person name="Steger M."/>
            <person name="Tonelli F."/>
            <person name="Ito G."/>
            <person name="Davies P."/>
            <person name="Trost M."/>
            <person name="Vetter M."/>
            <person name="Wachter S."/>
            <person name="Lorentzen E."/>
            <person name="Duddy G."/>
            <person name="Wilson S."/>
            <person name="Baptista M.A."/>
            <person name="Fiske B.K."/>
            <person name="Fell M.J."/>
            <person name="Morrow J.A."/>
            <person name="Reith A.D."/>
            <person name="Alessi D.R."/>
            <person name="Mann M."/>
        </authorList>
    </citation>
    <scope>PHOSPHORYLATION AT THR-72</scope>
</reference>
<reference key="17">
    <citation type="journal article" date="2017" name="Elife">
        <title>Systematic proteomic analysis of LRRK2-mediated Rab GTPase phosphorylation establishes a connection to ciliogenesis.</title>
        <authorList>
            <person name="Steger M."/>
            <person name="Diez F."/>
            <person name="Dhekne H.S."/>
            <person name="Lis P."/>
            <person name="Nirujogi R.S."/>
            <person name="Karayel O."/>
            <person name="Tonelli F."/>
            <person name="Martinez T.N."/>
            <person name="Lorentzen E."/>
            <person name="Pfeffer S.R."/>
            <person name="Alessi D.R."/>
            <person name="Mann M."/>
        </authorList>
    </citation>
    <scope>INTERACTION WITH RILPL1 AND RILPL2</scope>
    <scope>PHOSPHORYLATION AT THR-72</scope>
</reference>
<reference evidence="21" key="18">
    <citation type="journal article" date="2018" name="Proc. Natl. Acad. Sci. U.S.A.">
        <title>LRRK2 and its substrate Rab GTPases are sequentially targeted onto stressed lysosomes and maintain their homeostasis.</title>
        <authorList>
            <person name="Eguchi T."/>
            <person name="Kuwahara T."/>
            <person name="Sakurai M."/>
            <person name="Komori T."/>
            <person name="Fujimoto T."/>
            <person name="Ito G."/>
            <person name="Yoshimura S.I."/>
            <person name="Harada A."/>
            <person name="Fukuda M."/>
            <person name="Koike M."/>
            <person name="Iwatsubo T."/>
        </authorList>
    </citation>
    <scope>FUNCTION</scope>
    <scope>SUBCELLULAR LOCATION</scope>
    <scope>PHOSPHORYLATION AT THR-72</scope>
</reference>
<reference key="19">
    <citation type="journal article" date="2021" name="Commun. Biol.">
        <title>JRAB/MICAL-L2 undergoes liquid-liquid phase separation to form tubular recycling endosomes.</title>
        <authorList>
            <person name="Sakane A."/>
            <person name="Yano T.A."/>
            <person name="Uchihashi T."/>
            <person name="Horikawa K."/>
            <person name="Hara Y."/>
            <person name="Imoto I."/>
            <person name="Kurisu S."/>
            <person name="Yamada H."/>
            <person name="Takei K."/>
            <person name="Sasaki T."/>
        </authorList>
    </citation>
    <scope>INTERACTION WITH MICALL2</scope>
</reference>
<reference key="20">
    <citation type="journal article" date="2006" name="EMBO J.">
        <title>Nucleotide exchange via local protein unfolding--structure of Rab8 in complex with MSS4.</title>
        <authorList>
            <person name="Itzen A."/>
            <person name="Pylypenko O."/>
            <person name="Goody R.S."/>
            <person name="Alexandrov K."/>
            <person name="Rak A."/>
        </authorList>
    </citation>
    <scope>X-RAY CRYSTALLOGRAPHY (2.0 ANGSTROMS) OF 1-175 IN COMPLEX WITH RABIF</scope>
    <scope>INTERACTION WITH RABIF</scope>
    <scope>CATALYTIC ACTIVITY</scope>
</reference>
<keyword id="KW-0002">3D-structure</keyword>
<keyword id="KW-0072">Autophagy</keyword>
<keyword id="KW-1003">Cell membrane</keyword>
<keyword id="KW-0966">Cell projection</keyword>
<keyword id="KW-0969">Cilium</keyword>
<keyword id="KW-0970">Cilium biogenesis/degradation</keyword>
<keyword id="KW-0963">Cytoplasm</keyword>
<keyword id="KW-0968">Cytoplasmic vesicle</keyword>
<keyword id="KW-0206">Cytoskeleton</keyword>
<keyword id="KW-0903">Direct protein sequencing</keyword>
<keyword id="KW-0967">Endosome</keyword>
<keyword id="KW-0333">Golgi apparatus</keyword>
<keyword id="KW-0342">GTP-binding</keyword>
<keyword id="KW-0378">Hydrolase</keyword>
<keyword id="KW-0449">Lipoprotein</keyword>
<keyword id="KW-0458">Lysosome</keyword>
<keyword id="KW-0460">Magnesium</keyword>
<keyword id="KW-0472">Membrane</keyword>
<keyword id="KW-0479">Metal-binding</keyword>
<keyword id="KW-0488">Methylation</keyword>
<keyword id="KW-0547">Nucleotide-binding</keyword>
<keyword id="KW-0597">Phosphoprotein</keyword>
<keyword id="KW-0636">Prenylation</keyword>
<keyword id="KW-0653">Protein transport</keyword>
<keyword id="KW-0656">Proto-oncogene</keyword>
<keyword id="KW-1185">Reference proteome</keyword>
<keyword id="KW-0813">Transport</keyword>
<feature type="chain" id="PRO_0000121132" description="Ras-related protein Rab-8A">
    <location>
        <begin position="1"/>
        <end position="204"/>
    </location>
</feature>
<feature type="propeptide" id="PRO_0000370795" description="Removed in mature form" evidence="6">
    <location>
        <begin position="205"/>
        <end position="207"/>
    </location>
</feature>
<feature type="short sequence motif" description="Switch 1" evidence="5">
    <location>
        <begin position="31"/>
        <end position="45"/>
    </location>
</feature>
<feature type="short sequence motif" description="Switch 2" evidence="5">
    <location>
        <begin position="63"/>
        <end position="80"/>
    </location>
</feature>
<feature type="binding site" evidence="3">
    <location>
        <position position="17"/>
    </location>
    <ligand>
        <name>GTP</name>
        <dbReference type="ChEBI" id="CHEBI:37565"/>
    </ligand>
</feature>
<feature type="binding site" evidence="3">
    <location>
        <position position="18"/>
    </location>
    <ligand>
        <name>GTP</name>
        <dbReference type="ChEBI" id="CHEBI:37565"/>
    </ligand>
</feature>
<feature type="binding site" evidence="3">
    <location>
        <position position="19"/>
    </location>
    <ligand>
        <name>GTP</name>
        <dbReference type="ChEBI" id="CHEBI:37565"/>
    </ligand>
</feature>
<feature type="binding site" evidence="3">
    <location>
        <position position="20"/>
    </location>
    <ligand>
        <name>GTP</name>
        <dbReference type="ChEBI" id="CHEBI:37565"/>
    </ligand>
</feature>
<feature type="binding site" evidence="3">
    <location>
        <position position="21"/>
    </location>
    <ligand>
        <name>GTP</name>
        <dbReference type="ChEBI" id="CHEBI:37565"/>
    </ligand>
</feature>
<feature type="binding site" evidence="3">
    <location>
        <position position="22"/>
    </location>
    <ligand>
        <name>GTP</name>
        <dbReference type="ChEBI" id="CHEBI:37565"/>
    </ligand>
</feature>
<feature type="binding site" evidence="3">
    <location>
        <position position="22"/>
    </location>
    <ligand>
        <name>Mg(2+)</name>
        <dbReference type="ChEBI" id="CHEBI:18420"/>
    </ligand>
</feature>
<feature type="binding site" evidence="3">
    <location>
        <position position="23"/>
    </location>
    <ligand>
        <name>GTP</name>
        <dbReference type="ChEBI" id="CHEBI:37565"/>
    </ligand>
</feature>
<feature type="binding site" evidence="3">
    <location>
        <position position="35"/>
    </location>
    <ligand>
        <name>GTP</name>
        <dbReference type="ChEBI" id="CHEBI:37565"/>
    </ligand>
</feature>
<feature type="binding site" evidence="3">
    <location>
        <position position="39"/>
    </location>
    <ligand>
        <name>GTP</name>
        <dbReference type="ChEBI" id="CHEBI:37565"/>
    </ligand>
</feature>
<feature type="binding site" evidence="3">
    <location>
        <position position="40"/>
    </location>
    <ligand>
        <name>GTP</name>
        <dbReference type="ChEBI" id="CHEBI:37565"/>
    </ligand>
</feature>
<feature type="binding site" evidence="3">
    <location>
        <position position="40"/>
    </location>
    <ligand>
        <name>Mg(2+)</name>
        <dbReference type="ChEBI" id="CHEBI:18420"/>
    </ligand>
</feature>
<feature type="binding site" evidence="3">
    <location>
        <position position="63"/>
    </location>
    <ligand>
        <name>Mg(2+)</name>
        <dbReference type="ChEBI" id="CHEBI:18420"/>
    </ligand>
</feature>
<feature type="binding site" evidence="3">
    <location>
        <position position="66"/>
    </location>
    <ligand>
        <name>GTP</name>
        <dbReference type="ChEBI" id="CHEBI:37565"/>
    </ligand>
</feature>
<feature type="binding site" evidence="3">
    <location>
        <position position="121"/>
    </location>
    <ligand>
        <name>GTP</name>
        <dbReference type="ChEBI" id="CHEBI:37565"/>
    </ligand>
</feature>
<feature type="binding site" evidence="3">
    <location>
        <position position="122"/>
    </location>
    <ligand>
        <name>GTP</name>
        <dbReference type="ChEBI" id="CHEBI:37565"/>
    </ligand>
</feature>
<feature type="binding site" evidence="3">
    <location>
        <position position="124"/>
    </location>
    <ligand>
        <name>GTP</name>
        <dbReference type="ChEBI" id="CHEBI:37565"/>
    </ligand>
</feature>
<feature type="binding site" evidence="3">
    <location>
        <position position="152"/>
    </location>
    <ligand>
        <name>GTP</name>
        <dbReference type="ChEBI" id="CHEBI:37565"/>
    </ligand>
</feature>
<feature type="binding site" evidence="3">
    <location>
        <position position="153"/>
    </location>
    <ligand>
        <name>GTP</name>
        <dbReference type="ChEBI" id="CHEBI:37565"/>
    </ligand>
</feature>
<feature type="modified residue" description="Phosphothreonine; by LRRK2" evidence="16 17 18">
    <location>
        <position position="72"/>
    </location>
</feature>
<feature type="modified residue" description="Phosphoserine" evidence="3">
    <location>
        <position position="181"/>
    </location>
</feature>
<feature type="modified residue" description="Phosphoserine" evidence="25">
    <location>
        <position position="185"/>
    </location>
</feature>
<feature type="modified residue" description="Cysteine methyl ester" evidence="6">
    <location>
        <position position="204"/>
    </location>
</feature>
<feature type="lipid moiety-binding region" description="S-geranylgeranyl cysteine" evidence="1">
    <location>
        <position position="204"/>
    </location>
</feature>
<feature type="sequence conflict" description="In Ref. 1; AAB19682." evidence="21" ref="1">
    <original>KLEGNSPQ</original>
    <variation>NWKATAA</variation>
    <location>
        <begin position="176"/>
        <end position="183"/>
    </location>
</feature>
<feature type="strand" evidence="26">
    <location>
        <begin position="6"/>
        <end position="14"/>
    </location>
</feature>
<feature type="helix" evidence="26">
    <location>
        <begin position="37"/>
        <end position="41"/>
    </location>
</feature>
<feature type="strand" evidence="26">
    <location>
        <begin position="43"/>
        <end position="52"/>
    </location>
</feature>
<feature type="strand" evidence="26">
    <location>
        <begin position="55"/>
        <end position="63"/>
    </location>
</feature>
<feature type="turn" evidence="26">
    <location>
        <begin position="76"/>
        <end position="80"/>
    </location>
</feature>
<feature type="strand" evidence="26">
    <location>
        <begin position="82"/>
        <end position="89"/>
    </location>
</feature>
<feature type="helix" evidence="26">
    <location>
        <begin position="93"/>
        <end position="109"/>
    </location>
</feature>
<feature type="strand" evidence="26">
    <location>
        <begin position="115"/>
        <end position="121"/>
    </location>
</feature>
<feature type="helix" evidence="26">
    <location>
        <begin position="133"/>
        <end position="142"/>
    </location>
</feature>
<feature type="strand" evidence="26">
    <location>
        <begin position="146"/>
        <end position="149"/>
    </location>
</feature>
<feature type="helix" evidence="26">
    <location>
        <begin position="158"/>
        <end position="175"/>
    </location>
</feature>
<evidence type="ECO:0000250" key="1"/>
<evidence type="ECO:0000250" key="2">
    <source>
        <dbReference type="UniProtKB" id="P35280"/>
    </source>
</evidence>
<evidence type="ECO:0000250" key="3">
    <source>
        <dbReference type="UniProtKB" id="P61006"/>
    </source>
</evidence>
<evidence type="ECO:0000250" key="4">
    <source>
        <dbReference type="UniProtKB" id="P61007"/>
    </source>
</evidence>
<evidence type="ECO:0000250" key="5">
    <source>
        <dbReference type="UniProtKB" id="P62820"/>
    </source>
</evidence>
<evidence type="ECO:0000255" key="6"/>
<evidence type="ECO:0000269" key="7">
    <source>
    </source>
</evidence>
<evidence type="ECO:0000269" key="8">
    <source>
    </source>
</evidence>
<evidence type="ECO:0000269" key="9">
    <source>
    </source>
</evidence>
<evidence type="ECO:0000269" key="10">
    <source>
    </source>
</evidence>
<evidence type="ECO:0000269" key="11">
    <source>
    </source>
</evidence>
<evidence type="ECO:0000269" key="12">
    <source>
    </source>
</evidence>
<evidence type="ECO:0000269" key="13">
    <source>
    </source>
</evidence>
<evidence type="ECO:0000269" key="14">
    <source>
    </source>
</evidence>
<evidence type="ECO:0000269" key="15">
    <source>
    </source>
</evidence>
<evidence type="ECO:0000269" key="16">
    <source>
    </source>
</evidence>
<evidence type="ECO:0000269" key="17">
    <source>
    </source>
</evidence>
<evidence type="ECO:0000269" key="18">
    <source>
    </source>
</evidence>
<evidence type="ECO:0000269" key="19">
    <source>
    </source>
</evidence>
<evidence type="ECO:0000269" key="20">
    <source>
    </source>
</evidence>
<evidence type="ECO:0000305" key="21"/>
<evidence type="ECO:0000305" key="22">
    <source>
    </source>
</evidence>
<evidence type="ECO:0000305" key="23">
    <source>
    </source>
</evidence>
<evidence type="ECO:0000312" key="24">
    <source>
        <dbReference type="MGI" id="MGI:96960"/>
    </source>
</evidence>
<evidence type="ECO:0007744" key="25">
    <source>
    </source>
</evidence>
<evidence type="ECO:0007829" key="26">
    <source>
        <dbReference type="PDB" id="2FU5"/>
    </source>
</evidence>
<proteinExistence type="evidence at protein level"/>
<accession>P55258</accession>
<accession>Q8VCF6</accession>
<sequence length="207" mass="23668">MAKTYDYLFKLLLIGDSGVGKTCVLFRFSEDAFNSTFISTIGIDFKIRTIELDGKRIKLQIWDTAGQERFRTITTAYYRGAMGIMLVYDITNEKSFDNIRNWIRNIEEHASADVEKMILGNKCDVNDKRQVSKERGEKLALDYGIKFMETSAKANINVENAFFTLARDIKAKMDKKLEGNSPQGSSHGVKITVEQQKRTSFFRCSLL</sequence>
<comment type="function">
    <text evidence="2 3 11 18 23">The small GTPases Rab are key regulators of intracellular membrane trafficking, from the formation of transport vesicles to their fusion with membranes. Rabs cycle between an inactive GDP-bound form and an active GTP-bound form that is able to recruit to membranes different sets of downstream effectors directly responsible for vesicle formation, movement, tethering and fusion. RAB8A is involved in polarized vesicular trafficking and neurotransmitter release. Together with RAB11A, RAB3IP, the exocyst complex, PARD3, PRKCI, ANXA2, CDC42 and DNMBP promotes transcytosis of PODXL to the apical membrane initiation sites (AMIS), apical surface formation and lumenogenesis (By similarity). Regulates the compacted morphology of the Golgi (By similarity). Together with MYO5B and RAB11A participates in epithelial cell polarization (By similarity). Also involved in membrane trafficking to the cilium and ciliogenesis (PubMed:25860027). Together with MICALL2, may also regulate adherens junction assembly (PubMed:18094055). May play a role in insulin-induced transport to the plasma membrane of the glucose transporter GLUT4 and therefore play a role in glucose homeostasis (By similarity). Involved in autophagy (By similarity). Participates in the export of a subset of neosynthesized proteins through a Rab8-Rab10-Rab11-dependent endososomal export route (By similarity). Targeted to and stabilized on stressed lysosomes through LRRK2 phosphorylation (PubMed:30209220). Suppresses stress-induced lysosomal enlargement through EHBP1 and EHNP1L1 effector proteins (By similarity).</text>
</comment>
<comment type="catalytic activity">
    <reaction evidence="22">
        <text>GTP + H2O = GDP + phosphate + H(+)</text>
        <dbReference type="Rhea" id="RHEA:19669"/>
        <dbReference type="ChEBI" id="CHEBI:15377"/>
        <dbReference type="ChEBI" id="CHEBI:15378"/>
        <dbReference type="ChEBI" id="CHEBI:37565"/>
        <dbReference type="ChEBI" id="CHEBI:43474"/>
        <dbReference type="ChEBI" id="CHEBI:58189"/>
        <dbReference type="EC" id="3.6.5.2"/>
    </reaction>
    <physiologicalReaction direction="left-to-right" evidence="22">
        <dbReference type="Rhea" id="RHEA:19670"/>
    </physiologicalReaction>
</comment>
<comment type="cofactor">
    <cofactor evidence="3">
        <name>Mg(2+)</name>
        <dbReference type="ChEBI" id="CHEBI:18420"/>
    </cofactor>
</comment>
<comment type="activity regulation">
    <text evidence="2 3">Regulated by guanine nucleotide exchange factors (GEFs) such as RAB3IP/Rabin8 and RPGR which promote the exchange of bound GDP for free GTP, GTPase activating proteins (GAPs) which increase the GTP hydrolysis activity, and GDP dissociation inhibitors (GDIs) which inhibit the dissociation of the nucleotide from the GTPase (By similarity). Activated in response to insulin (By similarity).</text>
</comment>
<comment type="subunit">
    <text evidence="3 7 8 9 10 11 12 13 15 17 19 20">Interacts (GTP-bound form) with MICALL1; regulates RAB8A association with recycling endosomes (PubMed:18094055). Interacts with MICALL2; competes with RAB13 and is involved in E-cadherin endocytic recycling (PubMed:18094055, PubMed:33976349). Interacts (GTP-bound form) with MICAL1, MICALCL, MICAL3 and EHBP1L1; two molecules of RAB8A can bind to one molecule of the effector protein; ternary complexes of RAB8A, RAB13 and either MICAL1 or EHBP1L1 are possible (By similarity). Interacts (GTP-bound form) with EHBP1 (By similarity). Interacts with EHD1 (By similarity). Interacts with MAP4K2 and SYTL4 (PubMed:12590134, PubMed:8643544). Interacts with SGSM1 and SGSM3 (PubMed:17509819). Interacts with RABIF, RIMS2, RPH3A and RPH3A (PubMed:12578829, PubMed:16541104). Interacts with OPTN (By similarity). Interacts with MYO5B (By similarity). Interacts with CIMAP3 (PubMed:20643351). Interacts with BIRC6/bruce (By similarity). Interacts with OCRL (By similarity). Interacts with AHI1 (PubMed:19625297). Interacts with DCDC1 (By similarity). Interacts with LRRK2; interaction facilitates phosphorylation of Thr-72 (By similarity). Interacts with RAB31P, GDI1, GDI2, CHM, CHML, RABGGTA, RABGGTB, TBC1D15 and INPP5B; these interactions are dependent on Thr-72 not being phosphorylated (By similarity). Interacts with RILPL1 and RILPL2; these interactions are dependent on the phosphorylation of Thr-72 by LRRK2 (PubMed:29125462). Interacts with DZIP1; prevents inhibition by the GDP-dissociation inhibitor GDI2 (PubMed:25860027). Interacts with RAB3IP/Rabin8, RAB3IP functions as guanine exchange factor (GEF) towards RAB8A (PubMed:19625297). Interacts (in GDP-bound form) with RPGR, RPGR functions as GEF towards RAB8A (By similarity).</text>
</comment>
<comment type="interaction">
    <interactant intactId="EBI-398411">
        <id>P55258</id>
    </interactant>
    <interactant intactId="EBI-7089968">
        <id>Q8BMD2</id>
        <label>Dzip1</label>
    </interactant>
    <organismsDiffer>false</organismsDiffer>
    <experiments>2</experiments>
</comment>
<comment type="interaction">
    <interactant intactId="EBI-398411">
        <id>P55258</id>
    </interactant>
    <interactant intactId="EBI-398376">
        <id>P47708</id>
        <label>Rph3a</label>
    </interactant>
    <organismsDiffer>false</organismsDiffer>
    <experiments>2</experiments>
</comment>
<comment type="interaction">
    <interactant intactId="EBI-398411">
        <id>P55258</id>
    </interactant>
    <interactant intactId="EBI-2310271">
        <id>O55042</id>
        <label>Snca</label>
    </interactant>
    <organismsDiffer>false</organismsDiffer>
    <experiments>2</experiments>
</comment>
<comment type="interaction">
    <interactant intactId="EBI-398411">
        <id>P55258</id>
    </interactant>
    <interactant intactId="EBI-1049143">
        <id>P50395</id>
        <label>GDI2</label>
    </interactant>
    <organismsDiffer>true</organismsDiffer>
    <experiments>3</experiments>
</comment>
<comment type="subcellular location">
    <subcellularLocation>
        <location evidence="11">Cell membrane</location>
        <topology evidence="11">Lipid-anchor</topology>
        <orientation evidence="11">Cytoplasmic side</orientation>
    </subcellularLocation>
    <subcellularLocation>
        <location evidence="3">Golgi apparatus</location>
    </subcellularLocation>
    <subcellularLocation>
        <location evidence="3">Endosome membrane</location>
    </subcellularLocation>
    <subcellularLocation>
        <location evidence="11">Recycling endosome membrane</location>
    </subcellularLocation>
    <subcellularLocation>
        <location evidence="15">Cell projection</location>
        <location evidence="15">Cilium</location>
    </subcellularLocation>
    <subcellularLocation>
        <location evidence="3">Cytoplasmic vesicle</location>
        <location evidence="3">Phagosome membrane</location>
        <topology evidence="3">Lipid-anchor</topology>
        <orientation evidence="3">Cytoplasmic side</orientation>
    </subcellularLocation>
    <subcellularLocation>
        <location evidence="14">Cytoplasm</location>
        <location evidence="14">Cytoskeleton</location>
        <location evidence="14">Microtubule organizing center</location>
        <location evidence="14">Centrosome</location>
        <location evidence="14">Centriole</location>
    </subcellularLocation>
    <subcellularLocation>
        <location evidence="12 14 15">Cytoplasm</location>
        <location evidence="12 14 15">Cytoskeleton</location>
        <location evidence="12 14 15">Cilium basal body</location>
    </subcellularLocation>
    <subcellularLocation>
        <location evidence="3">Midbody</location>
    </subcellularLocation>
    <subcellularLocation>
        <location evidence="3">Cytoplasm</location>
    </subcellularLocation>
    <subcellularLocation>
        <location evidence="18">Lysosome</location>
    </subcellularLocation>
    <text evidence="3 4 18">Colocalizes with OPTN at the Golgi complex and in vesicular structures close to the plasma membrane. In the GDP-bound form, present in the perinuclear region. Shows a polarized distribution to distal regions of cell protrusions in the GTP-bound form. Colocalizes with PARD3, PRKCI, EXOC5, OCLN, PODXL and RAB11A in apical membrane initiation sites (AMIS) during the generation of apical surface and lumenogenesis. Localizes to tubular recycling endosome. Recruited to phagosomes containing S.aureus or Mycobacterium (By similarity). Non-phosphorylated RAB8A predominantly localizes to the cytoplasm whereas phosphorylated RAB8A localizes to the membrane (By similarity). Localizes to enlarged lysosomes through LRRK2 phosphorylation (PubMed:30209220). Colocalizes with RPGR at the primary cilia of epithelial cells (By similarity).</text>
</comment>
<comment type="domain">
    <text evidence="5">Switch 1, switch 2 and the interswitch regions are characteristic of Rab GTPases and mediate the interactions with Rab downstream effectors. The switch regions undergo conformational changes upon nucleotide binding which drives interaction with specific sets of effector proteins, with most effectors only binding to GTP-bound Rab.</text>
</comment>
<comment type="PTM">
    <text evidence="3 18">Phosphorylation of Thr-72 in the switch II region by LRRK2 prevents the association of RAB regulatory proteins, including CHM, CHML and RAB GDP dissociation inhibitors GDI1 and GDI2 (By similarity). Phosphorylation by LRRK2 is required for localization to stressed lysosomes (PubMed:30209220).</text>
</comment>
<comment type="similarity">
    <text evidence="21">Belongs to the small GTPase superfamily. Rab family.</text>
</comment>
<organism>
    <name type="scientific">Mus musculus</name>
    <name type="common">Mouse</name>
    <dbReference type="NCBI Taxonomy" id="10090"/>
    <lineage>
        <taxon>Eukaryota</taxon>
        <taxon>Metazoa</taxon>
        <taxon>Chordata</taxon>
        <taxon>Craniata</taxon>
        <taxon>Vertebrata</taxon>
        <taxon>Euteleostomi</taxon>
        <taxon>Mammalia</taxon>
        <taxon>Eutheria</taxon>
        <taxon>Euarchontoglires</taxon>
        <taxon>Glires</taxon>
        <taxon>Rodentia</taxon>
        <taxon>Myomorpha</taxon>
        <taxon>Muroidea</taxon>
        <taxon>Muridae</taxon>
        <taxon>Murinae</taxon>
        <taxon>Mus</taxon>
        <taxon>Mus</taxon>
    </lineage>
</organism>
<dbReference type="EC" id="3.6.5.2" evidence="22"/>
<dbReference type="EMBL" id="S53270">
    <property type="protein sequence ID" value="AAB19682.1"/>
    <property type="molecule type" value="mRNA"/>
</dbReference>
<dbReference type="EMBL" id="AK076048">
    <property type="protein sequence ID" value="BAC36146.1"/>
    <property type="molecule type" value="mRNA"/>
</dbReference>
<dbReference type="EMBL" id="AK079306">
    <property type="protein sequence ID" value="BAC37603.1"/>
    <property type="molecule type" value="mRNA"/>
</dbReference>
<dbReference type="EMBL" id="AK080740">
    <property type="protein sequence ID" value="BAC38003.1"/>
    <property type="molecule type" value="mRNA"/>
</dbReference>
<dbReference type="EMBL" id="BC019990">
    <property type="protein sequence ID" value="AAH19990.1"/>
    <property type="molecule type" value="mRNA"/>
</dbReference>
<dbReference type="CCDS" id="CCDS22409.1"/>
<dbReference type="RefSeq" id="NP_075615.2">
    <property type="nucleotide sequence ID" value="NM_023126.2"/>
</dbReference>
<dbReference type="PDB" id="2FU5">
    <property type="method" value="X-ray"/>
    <property type="resolution" value="2.00 A"/>
    <property type="chains" value="C/D=1-175"/>
</dbReference>
<dbReference type="PDBsum" id="2FU5"/>
<dbReference type="SMR" id="P55258"/>
<dbReference type="BioGRID" id="201387">
    <property type="interactions" value="18"/>
</dbReference>
<dbReference type="CORUM" id="P55258"/>
<dbReference type="DIP" id="DIP-31053N"/>
<dbReference type="FunCoup" id="P55258">
    <property type="interactions" value="3042"/>
</dbReference>
<dbReference type="IntAct" id="P55258">
    <property type="interactions" value="25"/>
</dbReference>
<dbReference type="MINT" id="P55258"/>
<dbReference type="STRING" id="10090.ENSMUSP00000003121"/>
<dbReference type="GlyGen" id="P55258">
    <property type="glycosylation" value="1 site, 1 O-linked glycan (1 site)"/>
</dbReference>
<dbReference type="iPTMnet" id="P55258"/>
<dbReference type="PhosphoSitePlus" id="P55258"/>
<dbReference type="SwissPalm" id="P55258"/>
<dbReference type="jPOST" id="P55258"/>
<dbReference type="PaxDb" id="10090-ENSMUSP00000003121"/>
<dbReference type="PeptideAtlas" id="P55258"/>
<dbReference type="ProteomicsDB" id="300343"/>
<dbReference type="Pumba" id="P55258"/>
<dbReference type="Antibodypedia" id="27297">
    <property type="antibodies" value="292 antibodies from 36 providers"/>
</dbReference>
<dbReference type="DNASU" id="17274"/>
<dbReference type="Ensembl" id="ENSMUST00000003121.9">
    <property type="protein sequence ID" value="ENSMUSP00000003121.9"/>
    <property type="gene ID" value="ENSMUSG00000003037.17"/>
</dbReference>
<dbReference type="GeneID" id="17274"/>
<dbReference type="KEGG" id="mmu:17274"/>
<dbReference type="UCSC" id="uc009mfj.1">
    <property type="organism name" value="mouse"/>
</dbReference>
<dbReference type="AGR" id="MGI:96960"/>
<dbReference type="CTD" id="4218"/>
<dbReference type="MGI" id="MGI:96960">
    <property type="gene designation" value="Rab8a"/>
</dbReference>
<dbReference type="VEuPathDB" id="HostDB:ENSMUSG00000003037"/>
<dbReference type="eggNOG" id="KOG0078">
    <property type="taxonomic scope" value="Eukaryota"/>
</dbReference>
<dbReference type="GeneTree" id="ENSGT00940000157246"/>
<dbReference type="HOGENOM" id="CLU_041217_23_1_1"/>
<dbReference type="InParanoid" id="P55258"/>
<dbReference type="OMA" id="SKMEQNE"/>
<dbReference type="OrthoDB" id="9989112at2759"/>
<dbReference type="PhylomeDB" id="P55258"/>
<dbReference type="TreeFam" id="TF314097"/>
<dbReference type="Reactome" id="R-MMU-2565942">
    <property type="pathway name" value="Regulation of PLK1 Activity at G2/M Transition"/>
</dbReference>
<dbReference type="Reactome" id="R-MMU-5620912">
    <property type="pathway name" value="Anchoring of the basal body to the plasma membrane"/>
</dbReference>
<dbReference type="Reactome" id="R-MMU-5620916">
    <property type="pathway name" value="VxPx cargo-targeting to cilium"/>
</dbReference>
<dbReference type="Reactome" id="R-MMU-8854214">
    <property type="pathway name" value="TBC/RABGAPs"/>
</dbReference>
<dbReference type="Reactome" id="R-MMU-8873719">
    <property type="pathway name" value="RAB geranylgeranylation"/>
</dbReference>
<dbReference type="Reactome" id="R-MMU-8876198">
    <property type="pathway name" value="RAB GEFs exchange GTP for GDP on RABs"/>
</dbReference>
<dbReference type="BioGRID-ORCS" id="17274">
    <property type="hits" value="4 hits in 77 CRISPR screens"/>
</dbReference>
<dbReference type="ChiTaRS" id="Rab8a">
    <property type="organism name" value="mouse"/>
</dbReference>
<dbReference type="EvolutionaryTrace" id="P55258"/>
<dbReference type="PRO" id="PR:P55258"/>
<dbReference type="Proteomes" id="UP000000589">
    <property type="component" value="Chromosome 8"/>
</dbReference>
<dbReference type="RNAct" id="P55258">
    <property type="molecule type" value="protein"/>
</dbReference>
<dbReference type="Bgee" id="ENSMUSG00000003037">
    <property type="expression patterns" value="Expressed in granulocyte and 258 other cell types or tissues"/>
</dbReference>
<dbReference type="ExpressionAtlas" id="P55258">
    <property type="expression patterns" value="baseline and differential"/>
</dbReference>
<dbReference type="GO" id="GO:0015629">
    <property type="term" value="C:actin cytoskeleton"/>
    <property type="evidence" value="ECO:0007669"/>
    <property type="project" value="Ensembl"/>
</dbReference>
<dbReference type="GO" id="GO:0034451">
    <property type="term" value="C:centriolar satellite"/>
    <property type="evidence" value="ECO:0007669"/>
    <property type="project" value="Ensembl"/>
</dbReference>
<dbReference type="GO" id="GO:0005814">
    <property type="term" value="C:centriole"/>
    <property type="evidence" value="ECO:0007669"/>
    <property type="project" value="UniProtKB-SubCell"/>
</dbReference>
<dbReference type="GO" id="GO:0005813">
    <property type="term" value="C:centrosome"/>
    <property type="evidence" value="ECO:0000250"/>
    <property type="project" value="UniProtKB"/>
</dbReference>
<dbReference type="GO" id="GO:0036064">
    <property type="term" value="C:ciliary basal body"/>
    <property type="evidence" value="ECO:0000314"/>
    <property type="project" value="UniProtKB"/>
</dbReference>
<dbReference type="GO" id="GO:0097546">
    <property type="term" value="C:ciliary base"/>
    <property type="evidence" value="ECO:0000314"/>
    <property type="project" value="MGI"/>
</dbReference>
<dbReference type="GO" id="GO:0060170">
    <property type="term" value="C:ciliary membrane"/>
    <property type="evidence" value="ECO:0000314"/>
    <property type="project" value="MGI"/>
</dbReference>
<dbReference type="GO" id="GO:0005929">
    <property type="term" value="C:cilium"/>
    <property type="evidence" value="ECO:0000314"/>
    <property type="project" value="UniProtKB"/>
</dbReference>
<dbReference type="GO" id="GO:0030659">
    <property type="term" value="C:cytoplasmic vesicle membrane"/>
    <property type="evidence" value="ECO:0000304"/>
    <property type="project" value="Reactome"/>
</dbReference>
<dbReference type="GO" id="GO:0005829">
    <property type="term" value="C:cytosol"/>
    <property type="evidence" value="ECO:0007669"/>
    <property type="project" value="Ensembl"/>
</dbReference>
<dbReference type="GO" id="GO:0030425">
    <property type="term" value="C:dendrite"/>
    <property type="evidence" value="ECO:0007669"/>
    <property type="project" value="Ensembl"/>
</dbReference>
<dbReference type="GO" id="GO:0010008">
    <property type="term" value="C:endosome membrane"/>
    <property type="evidence" value="ECO:0000250"/>
    <property type="project" value="UniProtKB"/>
</dbReference>
<dbReference type="GO" id="GO:0098978">
    <property type="term" value="C:glutamatergic synapse"/>
    <property type="evidence" value="ECO:0007669"/>
    <property type="project" value="Ensembl"/>
</dbReference>
<dbReference type="GO" id="GO:0005794">
    <property type="term" value="C:Golgi apparatus"/>
    <property type="evidence" value="ECO:0007669"/>
    <property type="project" value="UniProtKB-SubCell"/>
</dbReference>
<dbReference type="GO" id="GO:0005764">
    <property type="term" value="C:lysosome"/>
    <property type="evidence" value="ECO:0007669"/>
    <property type="project" value="UniProtKB-SubCell"/>
</dbReference>
<dbReference type="GO" id="GO:0030496">
    <property type="term" value="C:midbody"/>
    <property type="evidence" value="ECO:0000250"/>
    <property type="project" value="UniProtKB"/>
</dbReference>
<dbReference type="GO" id="GO:0043005">
    <property type="term" value="C:neuron projection"/>
    <property type="evidence" value="ECO:0000314"/>
    <property type="project" value="MGI"/>
</dbReference>
<dbReference type="GO" id="GO:0043025">
    <property type="term" value="C:neuronal cell body"/>
    <property type="evidence" value="ECO:0007669"/>
    <property type="project" value="Ensembl"/>
</dbReference>
<dbReference type="GO" id="GO:0097730">
    <property type="term" value="C:non-motile cilium"/>
    <property type="evidence" value="ECO:0000314"/>
    <property type="project" value="MGI"/>
</dbReference>
<dbReference type="GO" id="GO:0005730">
    <property type="term" value="C:nucleolus"/>
    <property type="evidence" value="ECO:0007669"/>
    <property type="project" value="Ensembl"/>
</dbReference>
<dbReference type="GO" id="GO:0005654">
    <property type="term" value="C:nucleoplasm"/>
    <property type="evidence" value="ECO:0007669"/>
    <property type="project" value="Ensembl"/>
</dbReference>
<dbReference type="GO" id="GO:0045335">
    <property type="term" value="C:phagocytic vesicle"/>
    <property type="evidence" value="ECO:0000250"/>
    <property type="project" value="UniProtKB"/>
</dbReference>
<dbReference type="GO" id="GO:0030670">
    <property type="term" value="C:phagocytic vesicle membrane"/>
    <property type="evidence" value="ECO:0007669"/>
    <property type="project" value="UniProtKB-SubCell"/>
</dbReference>
<dbReference type="GO" id="GO:0005886">
    <property type="term" value="C:plasma membrane"/>
    <property type="evidence" value="ECO:0000314"/>
    <property type="project" value="UniProtKB"/>
</dbReference>
<dbReference type="GO" id="GO:0055037">
    <property type="term" value="C:recycling endosome"/>
    <property type="evidence" value="ECO:0000314"/>
    <property type="project" value="UniProtKB"/>
</dbReference>
<dbReference type="GO" id="GO:0055038">
    <property type="term" value="C:recycling endosome membrane"/>
    <property type="evidence" value="ECO:0000250"/>
    <property type="project" value="UniProtKB"/>
</dbReference>
<dbReference type="GO" id="GO:0030140">
    <property type="term" value="C:trans-Golgi network transport vesicle"/>
    <property type="evidence" value="ECO:0000314"/>
    <property type="project" value="MGI"/>
</dbReference>
<dbReference type="GO" id="GO:0019003">
    <property type="term" value="F:GDP binding"/>
    <property type="evidence" value="ECO:0000250"/>
    <property type="project" value="UniProtKB"/>
</dbReference>
<dbReference type="GO" id="GO:0005525">
    <property type="term" value="F:GTP binding"/>
    <property type="evidence" value="ECO:0000250"/>
    <property type="project" value="UniProtKB"/>
</dbReference>
<dbReference type="GO" id="GO:0003924">
    <property type="term" value="F:GTPase activity"/>
    <property type="evidence" value="ECO:0000304"/>
    <property type="project" value="Reactome"/>
</dbReference>
<dbReference type="GO" id="GO:0031489">
    <property type="term" value="F:myosin V binding"/>
    <property type="evidence" value="ECO:0007669"/>
    <property type="project" value="Ensembl"/>
</dbReference>
<dbReference type="GO" id="GO:1990782">
    <property type="term" value="F:protein tyrosine kinase binding"/>
    <property type="evidence" value="ECO:0007669"/>
    <property type="project" value="Ensembl"/>
</dbReference>
<dbReference type="GO" id="GO:0031267">
    <property type="term" value="F:small GTPase binding"/>
    <property type="evidence" value="ECO:0000250"/>
    <property type="project" value="UniProtKB"/>
</dbReference>
<dbReference type="GO" id="GO:0006914">
    <property type="term" value="P:autophagy"/>
    <property type="evidence" value="ECO:0007669"/>
    <property type="project" value="UniProtKB-KW"/>
</dbReference>
<dbReference type="GO" id="GO:0007409">
    <property type="term" value="P:axonogenesis"/>
    <property type="evidence" value="ECO:0000250"/>
    <property type="project" value="UniProtKB"/>
</dbReference>
<dbReference type="GO" id="GO:0032869">
    <property type="term" value="P:cellular response to insulin stimulus"/>
    <property type="evidence" value="ECO:0000250"/>
    <property type="project" value="UniProtKB"/>
</dbReference>
<dbReference type="GO" id="GO:0060271">
    <property type="term" value="P:cilium assembly"/>
    <property type="evidence" value="ECO:0000315"/>
    <property type="project" value="UniProtKB"/>
</dbReference>
<dbReference type="GO" id="GO:0007030">
    <property type="term" value="P:Golgi organization"/>
    <property type="evidence" value="ECO:0000250"/>
    <property type="project" value="UniProtKB"/>
</dbReference>
<dbReference type="GO" id="GO:0048210">
    <property type="term" value="P:Golgi vesicle fusion to target membrane"/>
    <property type="evidence" value="ECO:0007669"/>
    <property type="project" value="Ensembl"/>
</dbReference>
<dbReference type="GO" id="GO:0098887">
    <property type="term" value="P:neurotransmitter receptor transport, endosome to postsynaptic membrane"/>
    <property type="evidence" value="ECO:0007669"/>
    <property type="project" value="Ensembl"/>
</dbReference>
<dbReference type="GO" id="GO:0061512">
    <property type="term" value="P:protein localization to cilium"/>
    <property type="evidence" value="ECO:0000315"/>
    <property type="project" value="UniProtKB"/>
</dbReference>
<dbReference type="GO" id="GO:0072659">
    <property type="term" value="P:protein localization to plasma membrane"/>
    <property type="evidence" value="ECO:0000250"/>
    <property type="project" value="UniProtKB"/>
</dbReference>
<dbReference type="GO" id="GO:0010506">
    <property type="term" value="P:regulation of autophagy"/>
    <property type="evidence" value="ECO:0000250"/>
    <property type="project" value="UniProtKB"/>
</dbReference>
<dbReference type="GO" id="GO:0048169">
    <property type="term" value="P:regulation of long-term neuronal synaptic plasticity"/>
    <property type="evidence" value="ECO:0007669"/>
    <property type="project" value="Ensembl"/>
</dbReference>
<dbReference type="GO" id="GO:0051223">
    <property type="term" value="P:regulation of protein transport"/>
    <property type="evidence" value="ECO:0007669"/>
    <property type="project" value="Ensembl"/>
</dbReference>
<dbReference type="GO" id="GO:0006904">
    <property type="term" value="P:vesicle docking involved in exocytosis"/>
    <property type="evidence" value="ECO:0007669"/>
    <property type="project" value="Ensembl"/>
</dbReference>
<dbReference type="GO" id="GO:0099003">
    <property type="term" value="P:vesicle-mediated transport in synapse"/>
    <property type="evidence" value="ECO:0007669"/>
    <property type="project" value="Ensembl"/>
</dbReference>
<dbReference type="CDD" id="cd01867">
    <property type="entry name" value="Rab8_Rab10_Rab13_like"/>
    <property type="match status" value="1"/>
</dbReference>
<dbReference type="FunFam" id="3.40.50.300:FF:000202">
    <property type="entry name" value="ras-related protein Rab-8A"/>
    <property type="match status" value="1"/>
</dbReference>
<dbReference type="Gene3D" id="3.40.50.300">
    <property type="entry name" value="P-loop containing nucleotide triphosphate hydrolases"/>
    <property type="match status" value="1"/>
</dbReference>
<dbReference type="InterPro" id="IPR027417">
    <property type="entry name" value="P-loop_NTPase"/>
</dbReference>
<dbReference type="InterPro" id="IPR005225">
    <property type="entry name" value="Small_GTP-bd"/>
</dbReference>
<dbReference type="InterPro" id="IPR001806">
    <property type="entry name" value="Small_GTPase"/>
</dbReference>
<dbReference type="InterPro" id="IPR050305">
    <property type="entry name" value="Small_GTPase_Rab"/>
</dbReference>
<dbReference type="NCBIfam" id="TIGR00231">
    <property type="entry name" value="small_GTP"/>
    <property type="match status" value="1"/>
</dbReference>
<dbReference type="PANTHER" id="PTHR47980">
    <property type="entry name" value="LD44762P"/>
    <property type="match status" value="1"/>
</dbReference>
<dbReference type="Pfam" id="PF00071">
    <property type="entry name" value="Ras"/>
    <property type="match status" value="1"/>
</dbReference>
<dbReference type="PRINTS" id="PR00449">
    <property type="entry name" value="RASTRNSFRMNG"/>
</dbReference>
<dbReference type="SMART" id="SM00177">
    <property type="entry name" value="ARF"/>
    <property type="match status" value="1"/>
</dbReference>
<dbReference type="SMART" id="SM00175">
    <property type="entry name" value="RAB"/>
    <property type="match status" value="1"/>
</dbReference>
<dbReference type="SMART" id="SM00176">
    <property type="entry name" value="RAN"/>
    <property type="match status" value="1"/>
</dbReference>
<dbReference type="SMART" id="SM00173">
    <property type="entry name" value="RAS"/>
    <property type="match status" value="1"/>
</dbReference>
<dbReference type="SMART" id="SM00174">
    <property type="entry name" value="RHO"/>
    <property type="match status" value="1"/>
</dbReference>
<dbReference type="SUPFAM" id="SSF52540">
    <property type="entry name" value="P-loop containing nucleoside triphosphate hydrolases"/>
    <property type="match status" value="1"/>
</dbReference>
<dbReference type="PROSITE" id="PS51419">
    <property type="entry name" value="RAB"/>
    <property type="match status" value="1"/>
</dbReference>